<organism>
    <name type="scientific">Salmonella heidelberg (strain SL476)</name>
    <dbReference type="NCBI Taxonomy" id="454169"/>
    <lineage>
        <taxon>Bacteria</taxon>
        <taxon>Pseudomonadati</taxon>
        <taxon>Pseudomonadota</taxon>
        <taxon>Gammaproteobacteria</taxon>
        <taxon>Enterobacterales</taxon>
        <taxon>Enterobacteriaceae</taxon>
        <taxon>Salmonella</taxon>
    </lineage>
</organism>
<accession>B4TI59</accession>
<reference key="1">
    <citation type="journal article" date="2011" name="J. Bacteriol.">
        <title>Comparative genomics of 28 Salmonella enterica isolates: evidence for CRISPR-mediated adaptive sublineage evolution.</title>
        <authorList>
            <person name="Fricke W.F."/>
            <person name="Mammel M.K."/>
            <person name="McDermott P.F."/>
            <person name="Tartera C."/>
            <person name="White D.G."/>
            <person name="Leclerc J.E."/>
            <person name="Ravel J."/>
            <person name="Cebula T.A."/>
        </authorList>
    </citation>
    <scope>NUCLEOTIDE SEQUENCE [LARGE SCALE GENOMIC DNA]</scope>
    <source>
        <strain>SL476</strain>
    </source>
</reference>
<protein>
    <recommendedName>
        <fullName evidence="1">tRNA N6-adenosine threonylcarbamoyltransferase</fullName>
        <ecNumber evidence="1">2.3.1.234</ecNumber>
    </recommendedName>
    <alternativeName>
        <fullName evidence="1">N6-L-threonylcarbamoyladenine synthase</fullName>
        <shortName evidence="1">t(6)A synthase</shortName>
    </alternativeName>
    <alternativeName>
        <fullName evidence="1">t(6)A37 threonylcarbamoyladenosine biosynthesis protein TsaD</fullName>
    </alternativeName>
    <alternativeName>
        <fullName evidence="1">tRNA threonylcarbamoyladenosine biosynthesis protein TsaD</fullName>
    </alternativeName>
</protein>
<name>TSAD_SALHS</name>
<dbReference type="EC" id="2.3.1.234" evidence="1"/>
<dbReference type="EMBL" id="CP001120">
    <property type="protein sequence ID" value="ACF68879.1"/>
    <property type="molecule type" value="Genomic_DNA"/>
</dbReference>
<dbReference type="RefSeq" id="WP_001264394.1">
    <property type="nucleotide sequence ID" value="NC_011083.1"/>
</dbReference>
<dbReference type="SMR" id="B4TI59"/>
<dbReference type="KEGG" id="seh:SeHA_C3462"/>
<dbReference type="HOGENOM" id="CLU_023208_0_0_6"/>
<dbReference type="Proteomes" id="UP000001866">
    <property type="component" value="Chromosome"/>
</dbReference>
<dbReference type="GO" id="GO:0005737">
    <property type="term" value="C:cytoplasm"/>
    <property type="evidence" value="ECO:0007669"/>
    <property type="project" value="UniProtKB-SubCell"/>
</dbReference>
<dbReference type="GO" id="GO:0005506">
    <property type="term" value="F:iron ion binding"/>
    <property type="evidence" value="ECO:0007669"/>
    <property type="project" value="UniProtKB-UniRule"/>
</dbReference>
<dbReference type="GO" id="GO:0061711">
    <property type="term" value="F:N(6)-L-threonylcarbamoyladenine synthase activity"/>
    <property type="evidence" value="ECO:0007669"/>
    <property type="project" value="UniProtKB-EC"/>
</dbReference>
<dbReference type="GO" id="GO:0002949">
    <property type="term" value="P:tRNA threonylcarbamoyladenosine modification"/>
    <property type="evidence" value="ECO:0007669"/>
    <property type="project" value="UniProtKB-UniRule"/>
</dbReference>
<dbReference type="CDD" id="cd24097">
    <property type="entry name" value="ASKHA_NBD_TsaD-like"/>
    <property type="match status" value="1"/>
</dbReference>
<dbReference type="FunFam" id="3.30.420.40:FF:000031">
    <property type="entry name" value="tRNA N6-adenosine threonylcarbamoyltransferase"/>
    <property type="match status" value="1"/>
</dbReference>
<dbReference type="Gene3D" id="3.30.420.40">
    <property type="match status" value="2"/>
</dbReference>
<dbReference type="HAMAP" id="MF_01445">
    <property type="entry name" value="TsaD"/>
    <property type="match status" value="1"/>
</dbReference>
<dbReference type="InterPro" id="IPR043129">
    <property type="entry name" value="ATPase_NBD"/>
</dbReference>
<dbReference type="InterPro" id="IPR000905">
    <property type="entry name" value="Gcp-like_dom"/>
</dbReference>
<dbReference type="InterPro" id="IPR017861">
    <property type="entry name" value="KAE1/TsaD"/>
</dbReference>
<dbReference type="InterPro" id="IPR017860">
    <property type="entry name" value="Peptidase_M22_CS"/>
</dbReference>
<dbReference type="InterPro" id="IPR022450">
    <property type="entry name" value="TsaD"/>
</dbReference>
<dbReference type="NCBIfam" id="TIGR00329">
    <property type="entry name" value="gcp_kae1"/>
    <property type="match status" value="1"/>
</dbReference>
<dbReference type="NCBIfam" id="TIGR03723">
    <property type="entry name" value="T6A_TsaD_YgjD"/>
    <property type="match status" value="1"/>
</dbReference>
<dbReference type="PANTHER" id="PTHR11735">
    <property type="entry name" value="TRNA N6-ADENOSINE THREONYLCARBAMOYLTRANSFERASE"/>
    <property type="match status" value="1"/>
</dbReference>
<dbReference type="PANTHER" id="PTHR11735:SF6">
    <property type="entry name" value="TRNA N6-ADENOSINE THREONYLCARBAMOYLTRANSFERASE, MITOCHONDRIAL"/>
    <property type="match status" value="1"/>
</dbReference>
<dbReference type="Pfam" id="PF00814">
    <property type="entry name" value="TsaD"/>
    <property type="match status" value="1"/>
</dbReference>
<dbReference type="PRINTS" id="PR00789">
    <property type="entry name" value="OSIALOPTASE"/>
</dbReference>
<dbReference type="SUPFAM" id="SSF53067">
    <property type="entry name" value="Actin-like ATPase domain"/>
    <property type="match status" value="1"/>
</dbReference>
<dbReference type="PROSITE" id="PS01016">
    <property type="entry name" value="GLYCOPROTEASE"/>
    <property type="match status" value="1"/>
</dbReference>
<proteinExistence type="inferred from homology"/>
<sequence length="337" mass="35940">MRVLGIETSCDETGIAIYDDKKGLLANQLYSQVKLHADYGGVVPELASRDHVRKTVPLIQAALKEAGLTASDIDAVAYTAGPGLVGALLVGATVGRSLAFAWNVPAIPVHHMEGHLLAPMLEDNPPEFPFVALLVSGGHTQLISVTGIGQYELLGESIDDAAGEAFDKTAKLLGLDYPGGPMLSKMASQGTAGRFVFPRPMTDRPGLDFSFSGLKTFAANTIRSNGGDEQTRADIARAFEDAVVDTLMIKCKRALESTGFKRLVMAGGVSANRTLRAKLAEMMQKRRGEVFYARPEFCTDNGAMIAYAGMVRFKAGVTADLGVTVRPRWPLAELPAA</sequence>
<keyword id="KW-0012">Acyltransferase</keyword>
<keyword id="KW-0963">Cytoplasm</keyword>
<keyword id="KW-0408">Iron</keyword>
<keyword id="KW-0479">Metal-binding</keyword>
<keyword id="KW-0808">Transferase</keyword>
<keyword id="KW-0819">tRNA processing</keyword>
<feature type="chain" id="PRO_1000146018" description="tRNA N6-adenosine threonylcarbamoyltransferase">
    <location>
        <begin position="1"/>
        <end position="337"/>
    </location>
</feature>
<feature type="binding site" evidence="1">
    <location>
        <position position="111"/>
    </location>
    <ligand>
        <name>Fe cation</name>
        <dbReference type="ChEBI" id="CHEBI:24875"/>
    </ligand>
</feature>
<feature type="binding site" evidence="1">
    <location>
        <position position="115"/>
    </location>
    <ligand>
        <name>Fe cation</name>
        <dbReference type="ChEBI" id="CHEBI:24875"/>
    </ligand>
</feature>
<feature type="binding site" evidence="1">
    <location>
        <begin position="134"/>
        <end position="138"/>
    </location>
    <ligand>
        <name>substrate</name>
    </ligand>
</feature>
<feature type="binding site" evidence="1">
    <location>
        <position position="167"/>
    </location>
    <ligand>
        <name>substrate</name>
    </ligand>
</feature>
<feature type="binding site" evidence="1">
    <location>
        <position position="180"/>
    </location>
    <ligand>
        <name>substrate</name>
    </ligand>
</feature>
<feature type="binding site" evidence="1">
    <location>
        <position position="272"/>
    </location>
    <ligand>
        <name>substrate</name>
    </ligand>
</feature>
<feature type="binding site" evidence="1">
    <location>
        <position position="300"/>
    </location>
    <ligand>
        <name>Fe cation</name>
        <dbReference type="ChEBI" id="CHEBI:24875"/>
    </ligand>
</feature>
<comment type="function">
    <text evidence="1">Required for the formation of a threonylcarbamoyl group on adenosine at position 37 (t(6)A37) in tRNAs that read codons beginning with adenine. Is involved in the transfer of the threonylcarbamoyl moiety of threonylcarbamoyl-AMP (TC-AMP) to the N6 group of A37, together with TsaE and TsaB. TsaD likely plays a direct catalytic role in this reaction.</text>
</comment>
<comment type="catalytic activity">
    <reaction evidence="1">
        <text>L-threonylcarbamoyladenylate + adenosine(37) in tRNA = N(6)-L-threonylcarbamoyladenosine(37) in tRNA + AMP + H(+)</text>
        <dbReference type="Rhea" id="RHEA:37059"/>
        <dbReference type="Rhea" id="RHEA-COMP:10162"/>
        <dbReference type="Rhea" id="RHEA-COMP:10163"/>
        <dbReference type="ChEBI" id="CHEBI:15378"/>
        <dbReference type="ChEBI" id="CHEBI:73682"/>
        <dbReference type="ChEBI" id="CHEBI:74411"/>
        <dbReference type="ChEBI" id="CHEBI:74418"/>
        <dbReference type="ChEBI" id="CHEBI:456215"/>
        <dbReference type="EC" id="2.3.1.234"/>
    </reaction>
</comment>
<comment type="cofactor">
    <cofactor evidence="1">
        <name>Fe(2+)</name>
        <dbReference type="ChEBI" id="CHEBI:29033"/>
    </cofactor>
    <text evidence="1">Binds 1 Fe(2+) ion per subunit.</text>
</comment>
<comment type="subcellular location">
    <subcellularLocation>
        <location evidence="1">Cytoplasm</location>
    </subcellularLocation>
</comment>
<comment type="similarity">
    <text evidence="1">Belongs to the KAE1 / TsaD family.</text>
</comment>
<evidence type="ECO:0000255" key="1">
    <source>
        <dbReference type="HAMAP-Rule" id="MF_01445"/>
    </source>
</evidence>
<gene>
    <name evidence="1" type="primary">tsaD</name>
    <name type="synonym">gcp</name>
    <name type="ordered locus">SeHA_C3462</name>
</gene>